<keyword id="KW-0044">Antibiotic</keyword>
<keyword id="KW-0929">Antimicrobial</keyword>
<keyword id="KW-0211">Defensin</keyword>
<keyword id="KW-1015">Disulfide bond</keyword>
<keyword id="KW-0295">Fungicide</keyword>
<keyword id="KW-1185">Reference proteome</keyword>
<keyword id="KW-0964">Secreted</keyword>
<keyword id="KW-0732">Signal</keyword>
<accession>Q30KP8</accession>
<accession>Q4QY36</accession>
<evidence type="ECO:0000250" key="1">
    <source>
        <dbReference type="UniProtKB" id="P60022"/>
    </source>
</evidence>
<evidence type="ECO:0000250" key="2">
    <source>
        <dbReference type="UniProtKB" id="P81534"/>
    </source>
</evidence>
<evidence type="ECO:0000255" key="3"/>
<evidence type="ECO:0000269" key="4">
    <source>
    </source>
</evidence>
<evidence type="ECO:0000303" key="5">
    <source>
    </source>
</evidence>
<evidence type="ECO:0000303" key="6">
    <source ref="2"/>
</evidence>
<evidence type="ECO:0000305" key="7"/>
<evidence type="ECO:0000312" key="8">
    <source>
        <dbReference type="HGNC" id="HGNC:34433"/>
    </source>
</evidence>
<proteinExistence type="inferred from homology"/>
<protein>
    <recommendedName>
        <fullName evidence="8">Defensin beta 136</fullName>
    </recommendedName>
    <alternativeName>
        <fullName evidence="5">Beta-defensin 136</fullName>
    </alternativeName>
    <alternativeName>
        <fullName evidence="6">DEFB137</fullName>
    </alternativeName>
</protein>
<reference key="1">
    <citation type="journal article" date="2005" name="Physiol. Genomics">
        <title>Cross-species analysis of the mammalian beta-defensin gene family: presence of syntenic gene clusters and preferential expression in the male reproductive tract.</title>
        <authorList>
            <person name="Patil A.A."/>
            <person name="Cai Y."/>
            <person name="Sang Y."/>
            <person name="Blecha F."/>
            <person name="Zhang G."/>
        </authorList>
    </citation>
    <scope>NUCLEOTIDE SEQUENCE [MRNA]</scope>
</reference>
<reference key="2">
    <citation type="submission" date="2004-05" db="EMBL/GenBank/DDBJ databases">
        <title>Genome-wide analysis of rat beta-defensins: evidence for the existence of four syntenic defensin gene clusters in mammals.</title>
        <authorList>
            <person name="Patil A."/>
            <person name="Zhang G."/>
        </authorList>
    </citation>
    <scope>NUCLEOTIDE SEQUENCE [MRNA] OF 1-73</scope>
</reference>
<reference key="3">
    <citation type="journal article" date="2021" name="Protein Expr. Purif.">
        <title>Soluble expression and purification of human beta-defensin DEFB136 in Escherichia coli and identification of its bioactivity.</title>
        <authorList>
            <person name="Liu H."/>
            <person name="Diao H."/>
            <person name="Hou J."/>
            <person name="Yu H."/>
            <person name="Wen H."/>
        </authorList>
    </citation>
    <scope>FUNCTION</scope>
</reference>
<comment type="function">
    <text evidence="4">Host defense peptide that exhibits antibacterial and antifungal activity (PubMed:34481960). Exhibits antimicrobial activity against E.coli, S.aureus and C.albicans (in vitro) (PubMed:34481960). Has high lipopolysaccharide (LPS)-binding affinity, and may thereby be involved in immunoregulation through LPS neutralization (PubMed:34481960).</text>
</comment>
<comment type="subcellular location">
    <subcellularLocation>
        <location evidence="1">Secreted</location>
    </subcellularLocation>
</comment>
<comment type="similarity">
    <text evidence="7">Belongs to the beta-defensin family.</text>
</comment>
<comment type="caution">
    <text evidence="7">Was termed (Ref.2) DEFB137.</text>
</comment>
<name>DB136_HUMAN</name>
<sequence length="78" mass="8755">MNLCLSALLFFLVILLPSGKGMFGNDGVKVRTCTSQKAVCFFGCPPGYRWIAFCHNILSCCKNMTRFQPPQAKDPWVH</sequence>
<organism>
    <name type="scientific">Homo sapiens</name>
    <name type="common">Human</name>
    <dbReference type="NCBI Taxonomy" id="9606"/>
    <lineage>
        <taxon>Eukaryota</taxon>
        <taxon>Metazoa</taxon>
        <taxon>Chordata</taxon>
        <taxon>Craniata</taxon>
        <taxon>Vertebrata</taxon>
        <taxon>Euteleostomi</taxon>
        <taxon>Mammalia</taxon>
        <taxon>Eutheria</taxon>
        <taxon>Euarchontoglires</taxon>
        <taxon>Primates</taxon>
        <taxon>Haplorrhini</taxon>
        <taxon>Catarrhini</taxon>
        <taxon>Hominidae</taxon>
        <taxon>Homo</taxon>
    </lineage>
</organism>
<dbReference type="EMBL" id="DQ012026">
    <property type="protein sequence ID" value="AAY59762.1"/>
    <property type="molecule type" value="mRNA"/>
</dbReference>
<dbReference type="EMBL" id="AY621333">
    <property type="protein sequence ID" value="AAT51872.1"/>
    <property type="molecule type" value="mRNA"/>
</dbReference>
<dbReference type="CCDS" id="CCDS43709.1"/>
<dbReference type="RefSeq" id="NP_001028190.2">
    <property type="nucleotide sequence ID" value="NM_001033018.2"/>
</dbReference>
<dbReference type="RefSeq" id="XP_016885978.1">
    <property type="nucleotide sequence ID" value="XM_017030489.1"/>
</dbReference>
<dbReference type="BioGRID" id="534790">
    <property type="interactions" value="79"/>
</dbReference>
<dbReference type="FunCoup" id="Q30KP8">
    <property type="interactions" value="1"/>
</dbReference>
<dbReference type="IntAct" id="Q30KP8">
    <property type="interactions" value="42"/>
</dbReference>
<dbReference type="STRING" id="9606.ENSP00000371644"/>
<dbReference type="BioMuta" id="DEFB136"/>
<dbReference type="DMDM" id="84028899"/>
<dbReference type="jPOST" id="Q30KP8"/>
<dbReference type="PaxDb" id="9606-ENSP00000371644"/>
<dbReference type="PeptideAtlas" id="Q30KP8"/>
<dbReference type="Antibodypedia" id="67428">
    <property type="antibodies" value="10 antibodies from 6 providers"/>
</dbReference>
<dbReference type="DNASU" id="613210"/>
<dbReference type="Ensembl" id="ENST00000382209.2">
    <property type="protein sequence ID" value="ENSP00000371644.2"/>
    <property type="gene ID" value="ENSG00000205884.2"/>
</dbReference>
<dbReference type="Ensembl" id="ENST00000646795.1">
    <property type="protein sequence ID" value="ENSP00000494776.1"/>
    <property type="gene ID" value="ENSG00000285087.1"/>
</dbReference>
<dbReference type="GeneID" id="613210"/>
<dbReference type="KEGG" id="hsa:613210"/>
<dbReference type="MANE-Select" id="ENST00000382209.2">
    <property type="protein sequence ID" value="ENSP00000371644.2"/>
    <property type="RefSeq nucleotide sequence ID" value="NM_001033018.2"/>
    <property type="RefSeq protein sequence ID" value="NP_001028190.2"/>
</dbReference>
<dbReference type="UCSC" id="uc011kxm.2">
    <property type="organism name" value="human"/>
</dbReference>
<dbReference type="AGR" id="HGNC:34433"/>
<dbReference type="CTD" id="613210"/>
<dbReference type="GeneCards" id="DEFB136"/>
<dbReference type="HGNC" id="HGNC:34433">
    <property type="gene designation" value="DEFB136"/>
</dbReference>
<dbReference type="HPA" id="ENSG00000205884">
    <property type="expression patterns" value="Tissue enriched (epididymis)"/>
</dbReference>
<dbReference type="neXtProt" id="NX_Q30KP8"/>
<dbReference type="OpenTargets" id="ENSG00000205884"/>
<dbReference type="PharmGKB" id="PA165585543"/>
<dbReference type="VEuPathDB" id="HostDB:ENSG00000205884"/>
<dbReference type="eggNOG" id="ENOG502R7G8">
    <property type="taxonomic scope" value="Eukaryota"/>
</dbReference>
<dbReference type="GeneTree" id="ENSGT00390000001862"/>
<dbReference type="HOGENOM" id="CLU_198474_0_0_1"/>
<dbReference type="InParanoid" id="Q30KP8"/>
<dbReference type="OMA" id="WVAFCHN"/>
<dbReference type="OrthoDB" id="9829371at2759"/>
<dbReference type="PAN-GO" id="Q30KP8">
    <property type="GO annotations" value="0 GO annotations based on evolutionary models"/>
</dbReference>
<dbReference type="PhylomeDB" id="Q30KP8"/>
<dbReference type="TreeFam" id="TF343350"/>
<dbReference type="PathwayCommons" id="Q30KP8"/>
<dbReference type="Reactome" id="R-HSA-1461957">
    <property type="pathway name" value="Beta defensins"/>
</dbReference>
<dbReference type="Reactome" id="R-HSA-1461973">
    <property type="pathway name" value="Defensins"/>
</dbReference>
<dbReference type="BioGRID-ORCS" id="613210">
    <property type="hits" value="10 hits in 1104 CRISPR screens"/>
</dbReference>
<dbReference type="Pharos" id="Q30KP8">
    <property type="development level" value="Tdark"/>
</dbReference>
<dbReference type="PRO" id="PR:Q30KP8"/>
<dbReference type="Proteomes" id="UP000005640">
    <property type="component" value="Chromosome 8"/>
</dbReference>
<dbReference type="RNAct" id="Q30KP8">
    <property type="molecule type" value="protein"/>
</dbReference>
<dbReference type="Bgee" id="ENSG00000205884">
    <property type="expression patterns" value="Expressed in superior frontal gyrus and 63 other cell types or tissues"/>
</dbReference>
<dbReference type="GO" id="GO:0005576">
    <property type="term" value="C:extracellular region"/>
    <property type="evidence" value="ECO:0007669"/>
    <property type="project" value="UniProtKB-SubCell"/>
</dbReference>
<dbReference type="GO" id="GO:0001530">
    <property type="term" value="F:lipopolysaccharide binding"/>
    <property type="evidence" value="ECO:0000314"/>
    <property type="project" value="UniProtKB"/>
</dbReference>
<dbReference type="GO" id="GO:0140367">
    <property type="term" value="P:antibacterial innate immune response"/>
    <property type="evidence" value="ECO:0000314"/>
    <property type="project" value="UniProtKB"/>
</dbReference>
<dbReference type="GO" id="GO:0061760">
    <property type="term" value="P:antifungal innate immune response"/>
    <property type="evidence" value="ECO:0000314"/>
    <property type="project" value="UniProtKB"/>
</dbReference>
<dbReference type="GO" id="GO:0050829">
    <property type="term" value="P:defense response to Gram-negative bacterium"/>
    <property type="evidence" value="ECO:0000314"/>
    <property type="project" value="UniProtKB"/>
</dbReference>
<dbReference type="GO" id="GO:0050830">
    <property type="term" value="P:defense response to Gram-positive bacterium"/>
    <property type="evidence" value="ECO:0000314"/>
    <property type="project" value="UniProtKB"/>
</dbReference>
<dbReference type="GO" id="GO:0031640">
    <property type="term" value="P:killing of cells of another organism"/>
    <property type="evidence" value="ECO:0007669"/>
    <property type="project" value="UniProtKB-KW"/>
</dbReference>
<dbReference type="InterPro" id="IPR035307">
    <property type="entry name" value="DEFB136/42"/>
</dbReference>
<dbReference type="PANTHER" id="PTHR39413">
    <property type="entry name" value="BETA-DEFENSIN 136"/>
    <property type="match status" value="1"/>
</dbReference>
<dbReference type="PANTHER" id="PTHR39413:SF1">
    <property type="entry name" value="DEFENSIN BETA 136"/>
    <property type="match status" value="1"/>
</dbReference>
<dbReference type="Pfam" id="PF17333">
    <property type="entry name" value="DEFB136"/>
    <property type="match status" value="1"/>
</dbReference>
<dbReference type="SUPFAM" id="SSF57392">
    <property type="entry name" value="Defensin-like"/>
    <property type="match status" value="1"/>
</dbReference>
<gene>
    <name type="primary">DEFB136</name>
</gene>
<feature type="signal peptide" evidence="3">
    <location>
        <begin position="1"/>
        <end position="21"/>
    </location>
</feature>
<feature type="chain" id="PRO_0000045364" description="Defensin beta 136">
    <location>
        <begin position="22"/>
        <end position="78"/>
    </location>
</feature>
<feature type="disulfide bond" evidence="2">
    <location>
        <begin position="33"/>
        <end position="60"/>
    </location>
</feature>
<feature type="disulfide bond" evidence="2">
    <location>
        <begin position="40"/>
        <end position="54"/>
    </location>
</feature>
<feature type="disulfide bond" evidence="2">
    <location>
        <begin position="44"/>
        <end position="61"/>
    </location>
</feature>